<sequence length="141" mass="15317">MAIERTLSIIKPDAVAKNVIGQIYARFEGAGLKVVAAKMIHLSRAEAEQFYAVHKERPFFKDLVDFMISGPVMVQALEGESAIVKNRDLMGATDPKKAEKGTIRADFADSIDANAVHGSDAAETAAVEVAFFFPGLNIYSR</sequence>
<proteinExistence type="inferred from homology"/>
<evidence type="ECO:0000255" key="1">
    <source>
        <dbReference type="HAMAP-Rule" id="MF_00451"/>
    </source>
</evidence>
<keyword id="KW-0067">ATP-binding</keyword>
<keyword id="KW-0963">Cytoplasm</keyword>
<keyword id="KW-0418">Kinase</keyword>
<keyword id="KW-0460">Magnesium</keyword>
<keyword id="KW-0479">Metal-binding</keyword>
<keyword id="KW-0546">Nucleotide metabolism</keyword>
<keyword id="KW-0547">Nucleotide-binding</keyword>
<keyword id="KW-0597">Phosphoprotein</keyword>
<keyword id="KW-1185">Reference proteome</keyword>
<keyword id="KW-0808">Transferase</keyword>
<comment type="function">
    <text evidence="1">Major role in the synthesis of nucleoside triphosphates other than ATP. The ATP gamma phosphate is transferred to the NDP beta phosphate via a ping-pong mechanism, using a phosphorylated active-site intermediate.</text>
</comment>
<comment type="catalytic activity">
    <reaction evidence="1">
        <text>a 2'-deoxyribonucleoside 5'-diphosphate + ATP = a 2'-deoxyribonucleoside 5'-triphosphate + ADP</text>
        <dbReference type="Rhea" id="RHEA:44640"/>
        <dbReference type="ChEBI" id="CHEBI:30616"/>
        <dbReference type="ChEBI" id="CHEBI:61560"/>
        <dbReference type="ChEBI" id="CHEBI:73316"/>
        <dbReference type="ChEBI" id="CHEBI:456216"/>
        <dbReference type="EC" id="2.7.4.6"/>
    </reaction>
</comment>
<comment type="catalytic activity">
    <reaction evidence="1">
        <text>a ribonucleoside 5'-diphosphate + ATP = a ribonucleoside 5'-triphosphate + ADP</text>
        <dbReference type="Rhea" id="RHEA:18113"/>
        <dbReference type="ChEBI" id="CHEBI:30616"/>
        <dbReference type="ChEBI" id="CHEBI:57930"/>
        <dbReference type="ChEBI" id="CHEBI:61557"/>
        <dbReference type="ChEBI" id="CHEBI:456216"/>
        <dbReference type="EC" id="2.7.4.6"/>
    </reaction>
</comment>
<comment type="cofactor">
    <cofactor evidence="1">
        <name>Mg(2+)</name>
        <dbReference type="ChEBI" id="CHEBI:18420"/>
    </cofactor>
</comment>
<comment type="subunit">
    <text evidence="1">Homotetramer.</text>
</comment>
<comment type="subcellular location">
    <subcellularLocation>
        <location evidence="1">Cytoplasm</location>
    </subcellularLocation>
</comment>
<comment type="similarity">
    <text evidence="1">Belongs to the NDK family.</text>
</comment>
<gene>
    <name evidence="1" type="primary">ndk</name>
    <name type="ordered locus">RSc1211</name>
    <name type="ORF">RS02703</name>
</gene>
<reference key="1">
    <citation type="journal article" date="2002" name="Nature">
        <title>Genome sequence of the plant pathogen Ralstonia solanacearum.</title>
        <authorList>
            <person name="Salanoubat M."/>
            <person name="Genin S."/>
            <person name="Artiguenave F."/>
            <person name="Gouzy J."/>
            <person name="Mangenot S."/>
            <person name="Arlat M."/>
            <person name="Billault A."/>
            <person name="Brottier P."/>
            <person name="Camus J.-C."/>
            <person name="Cattolico L."/>
            <person name="Chandler M."/>
            <person name="Choisne N."/>
            <person name="Claudel-Renard C."/>
            <person name="Cunnac S."/>
            <person name="Demange N."/>
            <person name="Gaspin C."/>
            <person name="Lavie M."/>
            <person name="Moisan A."/>
            <person name="Robert C."/>
            <person name="Saurin W."/>
            <person name="Schiex T."/>
            <person name="Siguier P."/>
            <person name="Thebault P."/>
            <person name="Whalen M."/>
            <person name="Wincker P."/>
            <person name="Levy M."/>
            <person name="Weissenbach J."/>
            <person name="Boucher C.A."/>
        </authorList>
    </citation>
    <scope>NUCLEOTIDE SEQUENCE [LARGE SCALE GENOMIC DNA]</scope>
    <source>
        <strain>ATCC BAA-1114 / GMI1000</strain>
    </source>
</reference>
<feature type="chain" id="PRO_0000137027" description="Nucleoside diphosphate kinase">
    <location>
        <begin position="1"/>
        <end position="141"/>
    </location>
</feature>
<feature type="active site" description="Pros-phosphohistidine intermediate" evidence="1">
    <location>
        <position position="117"/>
    </location>
</feature>
<feature type="binding site" evidence="1">
    <location>
        <position position="11"/>
    </location>
    <ligand>
        <name>ATP</name>
        <dbReference type="ChEBI" id="CHEBI:30616"/>
    </ligand>
</feature>
<feature type="binding site" evidence="1">
    <location>
        <position position="59"/>
    </location>
    <ligand>
        <name>ATP</name>
        <dbReference type="ChEBI" id="CHEBI:30616"/>
    </ligand>
</feature>
<feature type="binding site" evidence="1">
    <location>
        <position position="87"/>
    </location>
    <ligand>
        <name>ATP</name>
        <dbReference type="ChEBI" id="CHEBI:30616"/>
    </ligand>
</feature>
<feature type="binding site" evidence="1">
    <location>
        <position position="93"/>
    </location>
    <ligand>
        <name>ATP</name>
        <dbReference type="ChEBI" id="CHEBI:30616"/>
    </ligand>
</feature>
<feature type="binding site" evidence="1">
    <location>
        <position position="104"/>
    </location>
    <ligand>
        <name>ATP</name>
        <dbReference type="ChEBI" id="CHEBI:30616"/>
    </ligand>
</feature>
<feature type="binding site" evidence="1">
    <location>
        <position position="114"/>
    </location>
    <ligand>
        <name>ATP</name>
        <dbReference type="ChEBI" id="CHEBI:30616"/>
    </ligand>
</feature>
<organism>
    <name type="scientific">Ralstonia nicotianae (strain ATCC BAA-1114 / GMI1000)</name>
    <name type="common">Ralstonia solanacearum</name>
    <dbReference type="NCBI Taxonomy" id="267608"/>
    <lineage>
        <taxon>Bacteria</taxon>
        <taxon>Pseudomonadati</taxon>
        <taxon>Pseudomonadota</taxon>
        <taxon>Betaproteobacteria</taxon>
        <taxon>Burkholderiales</taxon>
        <taxon>Burkholderiaceae</taxon>
        <taxon>Ralstonia</taxon>
        <taxon>Ralstonia solanacearum species complex</taxon>
    </lineage>
</organism>
<accession>Q8Y033</accession>
<protein>
    <recommendedName>
        <fullName evidence="1">Nucleoside diphosphate kinase</fullName>
        <shortName evidence="1">NDK</shortName>
        <shortName evidence="1">NDP kinase</shortName>
        <ecNumber evidence="1">2.7.4.6</ecNumber>
    </recommendedName>
    <alternativeName>
        <fullName evidence="1">Nucleoside-2-P kinase</fullName>
    </alternativeName>
</protein>
<name>NDK_RALN1</name>
<dbReference type="EC" id="2.7.4.6" evidence="1"/>
<dbReference type="EMBL" id="AL646052">
    <property type="protein sequence ID" value="CAD14913.1"/>
    <property type="molecule type" value="Genomic_DNA"/>
</dbReference>
<dbReference type="RefSeq" id="WP_011001161.1">
    <property type="nucleotide sequence ID" value="NC_003295.1"/>
</dbReference>
<dbReference type="SMR" id="Q8Y033"/>
<dbReference type="STRING" id="267608.RSc1211"/>
<dbReference type="EnsemblBacteria" id="CAD14913">
    <property type="protein sequence ID" value="CAD14913"/>
    <property type="gene ID" value="RSc1211"/>
</dbReference>
<dbReference type="KEGG" id="rso:RSc1211"/>
<dbReference type="eggNOG" id="COG0105">
    <property type="taxonomic scope" value="Bacteria"/>
</dbReference>
<dbReference type="HOGENOM" id="CLU_060216_8_1_4"/>
<dbReference type="Proteomes" id="UP000001436">
    <property type="component" value="Chromosome"/>
</dbReference>
<dbReference type="GO" id="GO:0005737">
    <property type="term" value="C:cytoplasm"/>
    <property type="evidence" value="ECO:0007669"/>
    <property type="project" value="UniProtKB-SubCell"/>
</dbReference>
<dbReference type="GO" id="GO:0005524">
    <property type="term" value="F:ATP binding"/>
    <property type="evidence" value="ECO:0007669"/>
    <property type="project" value="UniProtKB-UniRule"/>
</dbReference>
<dbReference type="GO" id="GO:0046872">
    <property type="term" value="F:metal ion binding"/>
    <property type="evidence" value="ECO:0007669"/>
    <property type="project" value="UniProtKB-KW"/>
</dbReference>
<dbReference type="GO" id="GO:0004550">
    <property type="term" value="F:nucleoside diphosphate kinase activity"/>
    <property type="evidence" value="ECO:0007669"/>
    <property type="project" value="UniProtKB-UniRule"/>
</dbReference>
<dbReference type="GO" id="GO:0006241">
    <property type="term" value="P:CTP biosynthetic process"/>
    <property type="evidence" value="ECO:0007669"/>
    <property type="project" value="UniProtKB-UniRule"/>
</dbReference>
<dbReference type="GO" id="GO:0006183">
    <property type="term" value="P:GTP biosynthetic process"/>
    <property type="evidence" value="ECO:0007669"/>
    <property type="project" value="UniProtKB-UniRule"/>
</dbReference>
<dbReference type="GO" id="GO:0006228">
    <property type="term" value="P:UTP biosynthetic process"/>
    <property type="evidence" value="ECO:0007669"/>
    <property type="project" value="UniProtKB-UniRule"/>
</dbReference>
<dbReference type="CDD" id="cd04413">
    <property type="entry name" value="NDPk_I"/>
    <property type="match status" value="1"/>
</dbReference>
<dbReference type="FunFam" id="3.30.70.141:FF:000001">
    <property type="entry name" value="Nucleoside diphosphate kinase"/>
    <property type="match status" value="1"/>
</dbReference>
<dbReference type="Gene3D" id="3.30.70.141">
    <property type="entry name" value="Nucleoside diphosphate kinase-like domain"/>
    <property type="match status" value="1"/>
</dbReference>
<dbReference type="HAMAP" id="MF_00451">
    <property type="entry name" value="NDP_kinase"/>
    <property type="match status" value="1"/>
</dbReference>
<dbReference type="InterPro" id="IPR034907">
    <property type="entry name" value="NDK-like_dom"/>
</dbReference>
<dbReference type="InterPro" id="IPR036850">
    <property type="entry name" value="NDK-like_dom_sf"/>
</dbReference>
<dbReference type="InterPro" id="IPR001564">
    <property type="entry name" value="Nucleoside_diP_kinase"/>
</dbReference>
<dbReference type="NCBIfam" id="NF001908">
    <property type="entry name" value="PRK00668.1"/>
    <property type="match status" value="1"/>
</dbReference>
<dbReference type="PANTHER" id="PTHR46161">
    <property type="entry name" value="NUCLEOSIDE DIPHOSPHATE KINASE"/>
    <property type="match status" value="1"/>
</dbReference>
<dbReference type="PANTHER" id="PTHR46161:SF3">
    <property type="entry name" value="NUCLEOSIDE DIPHOSPHATE KINASE DDB_G0292928-RELATED"/>
    <property type="match status" value="1"/>
</dbReference>
<dbReference type="Pfam" id="PF00334">
    <property type="entry name" value="NDK"/>
    <property type="match status" value="1"/>
</dbReference>
<dbReference type="PRINTS" id="PR01243">
    <property type="entry name" value="NUCDPKINASE"/>
</dbReference>
<dbReference type="SMART" id="SM00562">
    <property type="entry name" value="NDK"/>
    <property type="match status" value="1"/>
</dbReference>
<dbReference type="SUPFAM" id="SSF54919">
    <property type="entry name" value="Nucleoside diphosphate kinase, NDK"/>
    <property type="match status" value="1"/>
</dbReference>
<dbReference type="PROSITE" id="PS51374">
    <property type="entry name" value="NDPK_LIKE"/>
    <property type="match status" value="1"/>
</dbReference>